<dbReference type="EMBL" id="AE005674">
    <property type="protein sequence ID" value="AAN45219.2"/>
    <property type="molecule type" value="Genomic_DNA"/>
</dbReference>
<dbReference type="EMBL" id="AE014073">
    <property type="protein sequence ID" value="AAP18978.1"/>
    <property type="molecule type" value="Genomic_DNA"/>
</dbReference>
<dbReference type="RefSeq" id="NP_709512.2">
    <property type="nucleotide sequence ID" value="NC_004337.2"/>
</dbReference>
<dbReference type="RefSeq" id="WP_001243431.1">
    <property type="nucleotide sequence ID" value="NZ_WPGW01000019.1"/>
</dbReference>
<dbReference type="SMR" id="P0C060"/>
<dbReference type="STRING" id="198214.SF3777"/>
<dbReference type="PaxDb" id="198214-SF3777"/>
<dbReference type="GeneID" id="1026113"/>
<dbReference type="GeneID" id="93778427"/>
<dbReference type="KEGG" id="sfl:SF3777"/>
<dbReference type="KEGG" id="sfx:S3993"/>
<dbReference type="PATRIC" id="fig|198214.7.peg.4458"/>
<dbReference type="HOGENOM" id="CLU_046737_4_2_6"/>
<dbReference type="Proteomes" id="UP000001006">
    <property type="component" value="Chromosome"/>
</dbReference>
<dbReference type="Proteomes" id="UP000002673">
    <property type="component" value="Chromosome"/>
</dbReference>
<dbReference type="GO" id="GO:0005737">
    <property type="term" value="C:cytoplasm"/>
    <property type="evidence" value="ECO:0007669"/>
    <property type="project" value="UniProtKB-SubCell"/>
</dbReference>
<dbReference type="GO" id="GO:0050821">
    <property type="term" value="P:protein stabilization"/>
    <property type="evidence" value="ECO:0007669"/>
    <property type="project" value="UniProtKB-UniRule"/>
</dbReference>
<dbReference type="CDD" id="cd06470">
    <property type="entry name" value="ACD_IbpA-B_like"/>
    <property type="match status" value="1"/>
</dbReference>
<dbReference type="FunFam" id="2.60.40.790:FF:000005">
    <property type="entry name" value="Small heat shock protein IbpB"/>
    <property type="match status" value="1"/>
</dbReference>
<dbReference type="Gene3D" id="2.60.40.790">
    <property type="match status" value="1"/>
</dbReference>
<dbReference type="HAMAP" id="MF_02001">
    <property type="entry name" value="HSP20_IbpB"/>
    <property type="match status" value="1"/>
</dbReference>
<dbReference type="InterPro" id="IPR002068">
    <property type="entry name" value="A-crystallin/Hsp20_dom"/>
</dbReference>
<dbReference type="InterPro" id="IPR037913">
    <property type="entry name" value="ACD_IbpA/B"/>
</dbReference>
<dbReference type="InterPro" id="IPR008978">
    <property type="entry name" value="HSP20-like_chaperone"/>
</dbReference>
<dbReference type="InterPro" id="IPR022848">
    <property type="entry name" value="HSP20_IbpB"/>
</dbReference>
<dbReference type="NCBIfam" id="NF008618">
    <property type="entry name" value="PRK11597.1"/>
    <property type="match status" value="1"/>
</dbReference>
<dbReference type="PANTHER" id="PTHR47062">
    <property type="match status" value="1"/>
</dbReference>
<dbReference type="PANTHER" id="PTHR47062:SF2">
    <property type="entry name" value="SMALL HEAT SHOCK PROTEIN IBPB"/>
    <property type="match status" value="1"/>
</dbReference>
<dbReference type="Pfam" id="PF00011">
    <property type="entry name" value="HSP20"/>
    <property type="match status" value="1"/>
</dbReference>
<dbReference type="SUPFAM" id="SSF49764">
    <property type="entry name" value="HSP20-like chaperones"/>
    <property type="match status" value="1"/>
</dbReference>
<dbReference type="PROSITE" id="PS01031">
    <property type="entry name" value="SHSP"/>
    <property type="match status" value="1"/>
</dbReference>
<proteinExistence type="inferred from homology"/>
<sequence length="142" mass="16093">MRNFDLSPLMRQWIGFDKLANALQNAGESQSFPPYNIEKSDDNHYRITLALAGFRQEDLEIQLEGTRLSVKGTPEQPKEEKKWLHQGLMNQPFSLSFTLAENMEVSGATFVNGLLHIDLIRNEPEPIAAQRIAISERPALNS</sequence>
<accession>P0C060</accession>
<accession>P29210</accession>
<accession>P76733</accession>
<feature type="chain" id="PRO_0000126036" description="Small heat shock protein IbpB">
    <location>
        <begin position="1"/>
        <end position="142"/>
    </location>
</feature>
<feature type="domain" description="sHSP" evidence="2">
    <location>
        <begin position="26"/>
        <end position="137"/>
    </location>
</feature>
<gene>
    <name evidence="1" type="primary">ibpB</name>
    <name type="ordered locus">SF3777</name>
    <name type="ordered locus">S3993</name>
</gene>
<evidence type="ECO:0000255" key="1">
    <source>
        <dbReference type="HAMAP-Rule" id="MF_02001"/>
    </source>
</evidence>
<evidence type="ECO:0000255" key="2">
    <source>
        <dbReference type="PROSITE-ProRule" id="PRU00285"/>
    </source>
</evidence>
<reference key="1">
    <citation type="journal article" date="2002" name="Nucleic Acids Res.">
        <title>Genome sequence of Shigella flexneri 2a: insights into pathogenicity through comparison with genomes of Escherichia coli K12 and O157.</title>
        <authorList>
            <person name="Jin Q."/>
            <person name="Yuan Z."/>
            <person name="Xu J."/>
            <person name="Wang Y."/>
            <person name="Shen Y."/>
            <person name="Lu W."/>
            <person name="Wang J."/>
            <person name="Liu H."/>
            <person name="Yang J."/>
            <person name="Yang F."/>
            <person name="Zhang X."/>
            <person name="Zhang J."/>
            <person name="Yang G."/>
            <person name="Wu H."/>
            <person name="Qu D."/>
            <person name="Dong J."/>
            <person name="Sun L."/>
            <person name="Xue Y."/>
            <person name="Zhao A."/>
            <person name="Gao Y."/>
            <person name="Zhu J."/>
            <person name="Kan B."/>
            <person name="Ding K."/>
            <person name="Chen S."/>
            <person name="Cheng H."/>
            <person name="Yao Z."/>
            <person name="He B."/>
            <person name="Chen R."/>
            <person name="Ma D."/>
            <person name="Qiang B."/>
            <person name="Wen Y."/>
            <person name="Hou Y."/>
            <person name="Yu J."/>
        </authorList>
    </citation>
    <scope>NUCLEOTIDE SEQUENCE [LARGE SCALE GENOMIC DNA]</scope>
    <source>
        <strain>301 / Serotype 2a</strain>
    </source>
</reference>
<reference key="2">
    <citation type="journal article" date="2003" name="Infect. Immun.">
        <title>Complete genome sequence and comparative genomics of Shigella flexneri serotype 2a strain 2457T.</title>
        <authorList>
            <person name="Wei J."/>
            <person name="Goldberg M.B."/>
            <person name="Burland V."/>
            <person name="Venkatesan M.M."/>
            <person name="Deng W."/>
            <person name="Fournier G."/>
            <person name="Mayhew G.F."/>
            <person name="Plunkett G. III"/>
            <person name="Rose D.J."/>
            <person name="Darling A."/>
            <person name="Mau B."/>
            <person name="Perna N.T."/>
            <person name="Payne S.M."/>
            <person name="Runyen-Janecky L.J."/>
            <person name="Zhou S."/>
            <person name="Schwartz D.C."/>
            <person name="Blattner F.R."/>
        </authorList>
    </citation>
    <scope>NUCLEOTIDE SEQUENCE [LARGE SCALE GENOMIC DNA]</scope>
    <source>
        <strain>ATCC 700930 / 2457T / Serotype 2a</strain>
    </source>
</reference>
<protein>
    <recommendedName>
        <fullName evidence="1">Small heat shock protein IbpB</fullName>
    </recommendedName>
    <alternativeName>
        <fullName evidence="1">16 kDa heat shock protein B</fullName>
    </alternativeName>
</protein>
<keyword id="KW-0143">Chaperone</keyword>
<keyword id="KW-0963">Cytoplasm</keyword>
<keyword id="KW-1185">Reference proteome</keyword>
<keyword id="KW-0346">Stress response</keyword>
<name>IBPB_SHIFL</name>
<organism>
    <name type="scientific">Shigella flexneri</name>
    <dbReference type="NCBI Taxonomy" id="623"/>
    <lineage>
        <taxon>Bacteria</taxon>
        <taxon>Pseudomonadati</taxon>
        <taxon>Pseudomonadota</taxon>
        <taxon>Gammaproteobacteria</taxon>
        <taxon>Enterobacterales</taxon>
        <taxon>Enterobacteriaceae</taxon>
        <taxon>Shigella</taxon>
    </lineage>
</organism>
<comment type="function">
    <text evidence="1">Associates with aggregated proteins, together with IbpA, to stabilize and protect them from irreversible denaturation and extensive proteolysis during heat shock and oxidative stress. Aggregated proteins bound to the IbpAB complex are more efficiently refolded and reactivated by the ATP-dependent chaperone systems ClpB and DnaK/DnaJ/GrpE. Its activity is ATP-independent.</text>
</comment>
<comment type="subunit">
    <text evidence="1">Homodimer. Forms homomultimers of about 100-150 subunits at optimal growth temperatures. Conformation changes to oligomers at high temperatures or high ionic concentrations. The decrease in size of the multimers is accompanied by an increase in chaperone activity.</text>
</comment>
<comment type="subcellular location">
    <subcellularLocation>
        <location evidence="1">Cytoplasm</location>
    </subcellularLocation>
</comment>
<comment type="domain">
    <text evidence="1">The N- and C-terminal flexible termini are involved in oligomerization and in the binding of non-native substrate proteins, and are essential for chaperone activity.</text>
</comment>
<comment type="similarity">
    <text evidence="1 2">Belongs to the small heat shock protein (HSP20) family.</text>
</comment>